<organism>
    <name type="scientific">Ambrosia artemisiifolia</name>
    <name type="common">Common ragweed</name>
    <dbReference type="NCBI Taxonomy" id="4212"/>
    <lineage>
        <taxon>Eukaryota</taxon>
        <taxon>Viridiplantae</taxon>
        <taxon>Streptophyta</taxon>
        <taxon>Embryophyta</taxon>
        <taxon>Tracheophyta</taxon>
        <taxon>Spermatophyta</taxon>
        <taxon>Magnoliopsida</taxon>
        <taxon>eudicotyledons</taxon>
        <taxon>Gunneridae</taxon>
        <taxon>Pentapetalae</taxon>
        <taxon>asterids</taxon>
        <taxon>campanulids</taxon>
        <taxon>Asterales</taxon>
        <taxon>Asteraceae</taxon>
        <taxon>Asteroideae</taxon>
        <taxon>Heliantheae alliance</taxon>
        <taxon>Heliantheae</taxon>
        <taxon>Ambrosia</taxon>
    </lineage>
</organism>
<keyword id="KW-0009">Actin-binding</keyword>
<keyword id="KW-0020">Allergen</keyword>
<keyword id="KW-0963">Cytoplasm</keyword>
<keyword id="KW-0206">Cytoskeleton</keyword>
<name>PROF2_AMBAR</name>
<reference key="1">
    <citation type="submission" date="2003-04" db="EMBL/GenBank/DDBJ databases">
        <title>Cloning and sequence analysis of grass pollen panallergens in Humulus scandens (Lour.) Merr and short ragweed (Ambrosia artemisiifolia L.).</title>
        <authorList>
            <person name="Tao A.L."/>
            <person name="He S.H."/>
            <person name="Zhang L."/>
            <person name="Chen Z."/>
            <person name="Li D."/>
        </authorList>
    </citation>
    <scope>NUCLEOTIDE SEQUENCE [MRNA]</scope>
    <source>
        <tissue>Pollen</tissue>
    </source>
</reference>
<sequence>MSWQAYVDDHLMCEIEGNHLSAAAIIGHDGVVWAQSATFPQVKPEEITGIMNDFNEPGSLAPTGLYLGGTKYMVIQGEPGAVIRGKKGPGGVTIKKTTMALIIGIYDEPMAPGQCNMIVERLGDYLLEQGF</sequence>
<dbReference type="EMBL" id="AY268425">
    <property type="protein sequence ID" value="AAP15201.1"/>
    <property type="molecule type" value="mRNA"/>
</dbReference>
<dbReference type="SMR" id="Q64LH2"/>
<dbReference type="Allergome" id="751">
    <property type="allergen name" value="Amb a 8"/>
</dbReference>
<dbReference type="GO" id="GO:0005938">
    <property type="term" value="C:cell cortex"/>
    <property type="evidence" value="ECO:0007669"/>
    <property type="project" value="TreeGrafter"/>
</dbReference>
<dbReference type="GO" id="GO:0005856">
    <property type="term" value="C:cytoskeleton"/>
    <property type="evidence" value="ECO:0007669"/>
    <property type="project" value="UniProtKB-SubCell"/>
</dbReference>
<dbReference type="GO" id="GO:0003785">
    <property type="term" value="F:actin monomer binding"/>
    <property type="evidence" value="ECO:0007669"/>
    <property type="project" value="TreeGrafter"/>
</dbReference>
<dbReference type="CDD" id="cd00148">
    <property type="entry name" value="PROF"/>
    <property type="match status" value="1"/>
</dbReference>
<dbReference type="FunFam" id="3.30.450.30:FF:000001">
    <property type="entry name" value="Profilin"/>
    <property type="match status" value="1"/>
</dbReference>
<dbReference type="Gene3D" id="3.30.450.30">
    <property type="entry name" value="Dynein light chain 2a, cytoplasmic"/>
    <property type="match status" value="1"/>
</dbReference>
<dbReference type="InterPro" id="IPR048278">
    <property type="entry name" value="PFN"/>
</dbReference>
<dbReference type="InterPro" id="IPR005455">
    <property type="entry name" value="PFN_euk"/>
</dbReference>
<dbReference type="InterPro" id="IPR036140">
    <property type="entry name" value="PFN_sf"/>
</dbReference>
<dbReference type="InterPro" id="IPR027310">
    <property type="entry name" value="Profilin_CS"/>
</dbReference>
<dbReference type="PANTHER" id="PTHR11604">
    <property type="entry name" value="PROFILIN"/>
    <property type="match status" value="1"/>
</dbReference>
<dbReference type="PANTHER" id="PTHR11604:SF49">
    <property type="entry name" value="PROFILIN-2"/>
    <property type="match status" value="1"/>
</dbReference>
<dbReference type="Pfam" id="PF00235">
    <property type="entry name" value="Profilin"/>
    <property type="match status" value="1"/>
</dbReference>
<dbReference type="PRINTS" id="PR00392">
    <property type="entry name" value="PROFILIN"/>
</dbReference>
<dbReference type="PRINTS" id="PR01640">
    <property type="entry name" value="PROFILINPLNT"/>
</dbReference>
<dbReference type="SMART" id="SM00392">
    <property type="entry name" value="PROF"/>
    <property type="match status" value="1"/>
</dbReference>
<dbReference type="SUPFAM" id="SSF55770">
    <property type="entry name" value="Profilin (actin-binding protein)"/>
    <property type="match status" value="1"/>
</dbReference>
<dbReference type="PROSITE" id="PS00414">
    <property type="entry name" value="PROFILIN"/>
    <property type="match status" value="1"/>
</dbReference>
<protein>
    <recommendedName>
        <fullName>Profilin-2</fullName>
    </recommendedName>
    <alternativeName>
        <fullName>Pollen allergen A0418</fullName>
    </alternativeName>
    <allergenName>Amb a 8</allergenName>
</protein>
<evidence type="ECO:0000250" key="1"/>
<evidence type="ECO:0000305" key="2"/>
<gene>
    <name type="ORF">A0418</name>
</gene>
<proteinExistence type="evidence at protein level"/>
<comment type="function">
    <text evidence="1">Binds to actin and affects the structure of the cytoskeleton. At high concentrations, profilin prevents the polymerization of actin, whereas it enhances it at low concentrations. By binding to PIP2, it inhibits the formation of IP3 and DG (By similarity).</text>
</comment>
<comment type="subunit">
    <text>Occurs in many kinds of cells as a complex with monomeric actin in a 1:1 ratio.</text>
</comment>
<comment type="subcellular location">
    <subcellularLocation>
        <location evidence="1">Cytoplasm</location>
        <location evidence="1">Cytoskeleton</location>
    </subcellularLocation>
</comment>
<comment type="allergen">
    <text>Causes an allergic reaction in human.</text>
</comment>
<comment type="similarity">
    <text evidence="2">Belongs to the profilin family.</text>
</comment>
<accession>Q64LH2</accession>
<feature type="initiator methionine" description="Removed" evidence="1">
    <location>
        <position position="1"/>
    </location>
</feature>
<feature type="chain" id="PRO_0000199610" description="Profilin-2">
    <location>
        <begin position="2"/>
        <end position="131"/>
    </location>
</feature>